<reference key="1">
    <citation type="submission" date="2008-01" db="EMBL/GenBank/DDBJ databases">
        <title>Complete sequence of Thermoanaerobacter sp. X514.</title>
        <authorList>
            <consortium name="US DOE Joint Genome Institute"/>
            <person name="Copeland A."/>
            <person name="Lucas S."/>
            <person name="Lapidus A."/>
            <person name="Barry K."/>
            <person name="Glavina del Rio T."/>
            <person name="Dalin E."/>
            <person name="Tice H."/>
            <person name="Pitluck S."/>
            <person name="Bruce D."/>
            <person name="Goodwin L."/>
            <person name="Saunders E."/>
            <person name="Brettin T."/>
            <person name="Detter J.C."/>
            <person name="Han C."/>
            <person name="Schmutz J."/>
            <person name="Larimer F."/>
            <person name="Land M."/>
            <person name="Hauser L."/>
            <person name="Kyrpides N."/>
            <person name="Kim E."/>
            <person name="Hemme C."/>
            <person name="Fields M.W."/>
            <person name="He Z."/>
            <person name="Zhou J."/>
            <person name="Richardson P."/>
        </authorList>
    </citation>
    <scope>NUCLEOTIDE SEQUENCE [LARGE SCALE GENOMIC DNA]</scope>
    <source>
        <strain>X514</strain>
    </source>
</reference>
<name>RL15_THEPX</name>
<organism>
    <name type="scientific">Thermoanaerobacter sp. (strain X514)</name>
    <dbReference type="NCBI Taxonomy" id="399726"/>
    <lineage>
        <taxon>Bacteria</taxon>
        <taxon>Bacillati</taxon>
        <taxon>Bacillota</taxon>
        <taxon>Clostridia</taxon>
        <taxon>Thermoanaerobacterales</taxon>
        <taxon>Thermoanaerobacteraceae</taxon>
        <taxon>Thermoanaerobacter</taxon>
    </lineage>
</organism>
<protein>
    <recommendedName>
        <fullName evidence="1">Large ribosomal subunit protein uL15</fullName>
    </recommendedName>
    <alternativeName>
        <fullName evidence="3">50S ribosomal protein L15</fullName>
    </alternativeName>
</protein>
<accession>B0K5R1</accession>
<keyword id="KW-0687">Ribonucleoprotein</keyword>
<keyword id="KW-0689">Ribosomal protein</keyword>
<keyword id="KW-0694">RNA-binding</keyword>
<keyword id="KW-0699">rRNA-binding</keyword>
<feature type="chain" id="PRO_1000142894" description="Large ribosomal subunit protein uL15">
    <location>
        <begin position="1"/>
        <end position="147"/>
    </location>
</feature>
<feature type="region of interest" description="Disordered" evidence="2">
    <location>
        <begin position="1"/>
        <end position="58"/>
    </location>
</feature>
<feature type="compositionally biased region" description="Basic and acidic residues" evidence="2">
    <location>
        <begin position="1"/>
        <end position="13"/>
    </location>
</feature>
<feature type="compositionally biased region" description="Gly residues" evidence="2">
    <location>
        <begin position="21"/>
        <end position="35"/>
    </location>
</feature>
<feature type="compositionally biased region" description="Gly residues" evidence="2">
    <location>
        <begin position="42"/>
        <end position="52"/>
    </location>
</feature>
<gene>
    <name evidence="1" type="primary">rplO</name>
    <name type="ordered locus">Teth514_0885</name>
</gene>
<comment type="function">
    <text evidence="1">Binds to the 23S rRNA.</text>
</comment>
<comment type="subunit">
    <text evidence="1">Part of the 50S ribosomal subunit.</text>
</comment>
<comment type="similarity">
    <text evidence="1">Belongs to the universal ribosomal protein uL15 family.</text>
</comment>
<dbReference type="EMBL" id="CP000923">
    <property type="protein sequence ID" value="ABY92187.1"/>
    <property type="molecule type" value="Genomic_DNA"/>
</dbReference>
<dbReference type="RefSeq" id="WP_003868578.1">
    <property type="nucleotide sequence ID" value="NC_010320.1"/>
</dbReference>
<dbReference type="SMR" id="B0K5R1"/>
<dbReference type="KEGG" id="tex:Teth514_0885"/>
<dbReference type="HOGENOM" id="CLU_055188_4_2_9"/>
<dbReference type="Proteomes" id="UP000002155">
    <property type="component" value="Chromosome"/>
</dbReference>
<dbReference type="GO" id="GO:0022625">
    <property type="term" value="C:cytosolic large ribosomal subunit"/>
    <property type="evidence" value="ECO:0007669"/>
    <property type="project" value="TreeGrafter"/>
</dbReference>
<dbReference type="GO" id="GO:0019843">
    <property type="term" value="F:rRNA binding"/>
    <property type="evidence" value="ECO:0007669"/>
    <property type="project" value="UniProtKB-UniRule"/>
</dbReference>
<dbReference type="GO" id="GO:0003735">
    <property type="term" value="F:structural constituent of ribosome"/>
    <property type="evidence" value="ECO:0007669"/>
    <property type="project" value="InterPro"/>
</dbReference>
<dbReference type="GO" id="GO:0006412">
    <property type="term" value="P:translation"/>
    <property type="evidence" value="ECO:0007669"/>
    <property type="project" value="UniProtKB-UniRule"/>
</dbReference>
<dbReference type="Gene3D" id="3.100.10.10">
    <property type="match status" value="1"/>
</dbReference>
<dbReference type="HAMAP" id="MF_01341">
    <property type="entry name" value="Ribosomal_uL15"/>
    <property type="match status" value="1"/>
</dbReference>
<dbReference type="InterPro" id="IPR030878">
    <property type="entry name" value="Ribosomal_uL15"/>
</dbReference>
<dbReference type="InterPro" id="IPR021131">
    <property type="entry name" value="Ribosomal_uL15/eL18"/>
</dbReference>
<dbReference type="InterPro" id="IPR036227">
    <property type="entry name" value="Ribosomal_uL15/eL18_sf"/>
</dbReference>
<dbReference type="InterPro" id="IPR005749">
    <property type="entry name" value="Ribosomal_uL15_bac-type"/>
</dbReference>
<dbReference type="InterPro" id="IPR001196">
    <property type="entry name" value="Ribosomal_uL15_CS"/>
</dbReference>
<dbReference type="NCBIfam" id="TIGR01071">
    <property type="entry name" value="rplO_bact"/>
    <property type="match status" value="1"/>
</dbReference>
<dbReference type="PANTHER" id="PTHR12934">
    <property type="entry name" value="50S RIBOSOMAL PROTEIN L15"/>
    <property type="match status" value="1"/>
</dbReference>
<dbReference type="PANTHER" id="PTHR12934:SF11">
    <property type="entry name" value="LARGE RIBOSOMAL SUBUNIT PROTEIN UL15M"/>
    <property type="match status" value="1"/>
</dbReference>
<dbReference type="Pfam" id="PF00828">
    <property type="entry name" value="Ribosomal_L27A"/>
    <property type="match status" value="1"/>
</dbReference>
<dbReference type="SUPFAM" id="SSF52080">
    <property type="entry name" value="Ribosomal proteins L15p and L18e"/>
    <property type="match status" value="1"/>
</dbReference>
<dbReference type="PROSITE" id="PS00475">
    <property type="entry name" value="RIBOSOMAL_L15"/>
    <property type="match status" value="1"/>
</dbReference>
<sequence length="147" mass="15905">MRLHDLKPAEGARRERKRVGRGIGSGHGKTSGRGQKGQKARSGGGVRPGFEGGQMPLTRRLPKRGFTNIFKKEYAIVNVGTLEERFEDGAVITPEALIESGIIKDVKDGVKILGDGDLNKKFTVRAHKFSQSAIEKIQAVGGKAEVI</sequence>
<evidence type="ECO:0000255" key="1">
    <source>
        <dbReference type="HAMAP-Rule" id="MF_01341"/>
    </source>
</evidence>
<evidence type="ECO:0000256" key="2">
    <source>
        <dbReference type="SAM" id="MobiDB-lite"/>
    </source>
</evidence>
<evidence type="ECO:0000305" key="3"/>
<proteinExistence type="inferred from homology"/>